<evidence type="ECO:0000255" key="1">
    <source>
        <dbReference type="HAMAP-Rule" id="MF_01693"/>
    </source>
</evidence>
<feature type="chain" id="PRO_0000380985" description="8-amino-7-oxononanoate synthase">
    <location>
        <begin position="1"/>
        <end position="384"/>
    </location>
</feature>
<feature type="binding site" evidence="1">
    <location>
        <position position="21"/>
    </location>
    <ligand>
        <name>substrate</name>
    </ligand>
</feature>
<feature type="binding site" evidence="1">
    <location>
        <begin position="108"/>
        <end position="109"/>
    </location>
    <ligand>
        <name>pyridoxal 5'-phosphate</name>
        <dbReference type="ChEBI" id="CHEBI:597326"/>
    </ligand>
</feature>
<feature type="binding site" evidence="1">
    <location>
        <position position="133"/>
    </location>
    <ligand>
        <name>substrate</name>
    </ligand>
</feature>
<feature type="binding site" evidence="1">
    <location>
        <position position="179"/>
    </location>
    <ligand>
        <name>pyridoxal 5'-phosphate</name>
        <dbReference type="ChEBI" id="CHEBI:597326"/>
    </ligand>
</feature>
<feature type="binding site" evidence="1">
    <location>
        <position position="207"/>
    </location>
    <ligand>
        <name>pyridoxal 5'-phosphate</name>
        <dbReference type="ChEBI" id="CHEBI:597326"/>
    </ligand>
</feature>
<feature type="binding site" evidence="1">
    <location>
        <position position="233"/>
    </location>
    <ligand>
        <name>pyridoxal 5'-phosphate</name>
        <dbReference type="ChEBI" id="CHEBI:597326"/>
    </ligand>
</feature>
<feature type="binding site" evidence="1">
    <location>
        <position position="352"/>
    </location>
    <ligand>
        <name>substrate</name>
    </ligand>
</feature>
<feature type="modified residue" description="N6-(pyridoxal phosphate)lysine" evidence="1">
    <location>
        <position position="236"/>
    </location>
</feature>
<protein>
    <recommendedName>
        <fullName evidence="1">8-amino-7-oxononanoate synthase</fullName>
        <shortName evidence="1">AONS</shortName>
        <ecNumber evidence="1">2.3.1.47</ecNumber>
    </recommendedName>
    <alternativeName>
        <fullName evidence="1">7-keto-8-amino-pelargonic acid synthase</fullName>
        <shortName evidence="1">7-KAP synthase</shortName>
        <shortName evidence="1">KAPA synthase</shortName>
    </alternativeName>
    <alternativeName>
        <fullName evidence="1">8-amino-7-ketopelargonate synthase</fullName>
    </alternativeName>
</protein>
<keyword id="KW-0093">Biotin biosynthesis</keyword>
<keyword id="KW-0663">Pyridoxal phosphate</keyword>
<keyword id="KW-0808">Transferase</keyword>
<reference key="1">
    <citation type="journal article" date="2006" name="Proc. Natl. Acad. Sci. U.S.A.">
        <title>Identification of genes subject to positive selection in uropathogenic strains of Escherichia coli: a comparative genomics approach.</title>
        <authorList>
            <person name="Chen S.L."/>
            <person name="Hung C.-S."/>
            <person name="Xu J."/>
            <person name="Reigstad C.S."/>
            <person name="Magrini V."/>
            <person name="Sabo A."/>
            <person name="Blasiar D."/>
            <person name="Bieri T."/>
            <person name="Meyer R.R."/>
            <person name="Ozersky P."/>
            <person name="Armstrong J.R."/>
            <person name="Fulton R.S."/>
            <person name="Latreille J.P."/>
            <person name="Spieth J."/>
            <person name="Hooton T.M."/>
            <person name="Mardis E.R."/>
            <person name="Hultgren S.J."/>
            <person name="Gordon J.I."/>
        </authorList>
    </citation>
    <scope>NUCLEOTIDE SEQUENCE [LARGE SCALE GENOMIC DNA]</scope>
    <source>
        <strain>UTI89 / UPEC</strain>
    </source>
</reference>
<dbReference type="EC" id="2.3.1.47" evidence="1"/>
<dbReference type="EMBL" id="CP000243">
    <property type="protein sequence ID" value="ABE06260.1"/>
    <property type="molecule type" value="Genomic_DNA"/>
</dbReference>
<dbReference type="RefSeq" id="WP_000638121.1">
    <property type="nucleotide sequence ID" value="NZ_CP064825.1"/>
</dbReference>
<dbReference type="SMR" id="Q1REF4"/>
<dbReference type="KEGG" id="eci:UTI89_C0774"/>
<dbReference type="HOGENOM" id="CLU_015846_11_2_6"/>
<dbReference type="UniPathway" id="UPA00078"/>
<dbReference type="Proteomes" id="UP000001952">
    <property type="component" value="Chromosome"/>
</dbReference>
<dbReference type="GO" id="GO:0008710">
    <property type="term" value="F:8-amino-7-oxononanoate synthase activity"/>
    <property type="evidence" value="ECO:0007669"/>
    <property type="project" value="UniProtKB-UniRule"/>
</dbReference>
<dbReference type="GO" id="GO:0030170">
    <property type="term" value="F:pyridoxal phosphate binding"/>
    <property type="evidence" value="ECO:0007669"/>
    <property type="project" value="UniProtKB-UniRule"/>
</dbReference>
<dbReference type="GO" id="GO:0009102">
    <property type="term" value="P:biotin biosynthetic process"/>
    <property type="evidence" value="ECO:0007669"/>
    <property type="project" value="UniProtKB-UniRule"/>
</dbReference>
<dbReference type="CDD" id="cd06454">
    <property type="entry name" value="KBL_like"/>
    <property type="match status" value="1"/>
</dbReference>
<dbReference type="FunFam" id="3.40.640.10:FF:000095">
    <property type="entry name" value="8-amino-7-oxononanoate synthase"/>
    <property type="match status" value="1"/>
</dbReference>
<dbReference type="FunFam" id="3.90.1150.10:FF:000036">
    <property type="entry name" value="8-amino-7-oxononanoate synthase"/>
    <property type="match status" value="1"/>
</dbReference>
<dbReference type="Gene3D" id="3.90.1150.10">
    <property type="entry name" value="Aspartate Aminotransferase, domain 1"/>
    <property type="match status" value="1"/>
</dbReference>
<dbReference type="Gene3D" id="3.40.640.10">
    <property type="entry name" value="Type I PLP-dependent aspartate aminotransferase-like (Major domain)"/>
    <property type="match status" value="1"/>
</dbReference>
<dbReference type="HAMAP" id="MF_01693">
    <property type="entry name" value="BioF_aminotrans_2"/>
    <property type="match status" value="1"/>
</dbReference>
<dbReference type="InterPro" id="IPR001917">
    <property type="entry name" value="Aminotrans_II_pyridoxalP_BS"/>
</dbReference>
<dbReference type="InterPro" id="IPR004839">
    <property type="entry name" value="Aminotransferase_I/II_large"/>
</dbReference>
<dbReference type="InterPro" id="IPR050087">
    <property type="entry name" value="AON_synthase_class-II"/>
</dbReference>
<dbReference type="InterPro" id="IPR004723">
    <property type="entry name" value="AONS_Archaea/Proteobacteria"/>
</dbReference>
<dbReference type="InterPro" id="IPR022834">
    <property type="entry name" value="AONS_Proteobacteria"/>
</dbReference>
<dbReference type="InterPro" id="IPR015424">
    <property type="entry name" value="PyrdxlP-dep_Trfase"/>
</dbReference>
<dbReference type="InterPro" id="IPR015421">
    <property type="entry name" value="PyrdxlP-dep_Trfase_major"/>
</dbReference>
<dbReference type="InterPro" id="IPR015422">
    <property type="entry name" value="PyrdxlP-dep_Trfase_small"/>
</dbReference>
<dbReference type="NCBIfam" id="TIGR00858">
    <property type="entry name" value="bioF"/>
    <property type="match status" value="1"/>
</dbReference>
<dbReference type="PANTHER" id="PTHR13693:SF100">
    <property type="entry name" value="8-AMINO-7-OXONONANOATE SYNTHASE"/>
    <property type="match status" value="1"/>
</dbReference>
<dbReference type="PANTHER" id="PTHR13693">
    <property type="entry name" value="CLASS II AMINOTRANSFERASE/8-AMINO-7-OXONONANOATE SYNTHASE"/>
    <property type="match status" value="1"/>
</dbReference>
<dbReference type="Pfam" id="PF00155">
    <property type="entry name" value="Aminotran_1_2"/>
    <property type="match status" value="1"/>
</dbReference>
<dbReference type="SUPFAM" id="SSF53383">
    <property type="entry name" value="PLP-dependent transferases"/>
    <property type="match status" value="1"/>
</dbReference>
<dbReference type="PROSITE" id="PS00599">
    <property type="entry name" value="AA_TRANSFER_CLASS_2"/>
    <property type="match status" value="1"/>
</dbReference>
<organism>
    <name type="scientific">Escherichia coli (strain UTI89 / UPEC)</name>
    <dbReference type="NCBI Taxonomy" id="364106"/>
    <lineage>
        <taxon>Bacteria</taxon>
        <taxon>Pseudomonadati</taxon>
        <taxon>Pseudomonadota</taxon>
        <taxon>Gammaproteobacteria</taxon>
        <taxon>Enterobacterales</taxon>
        <taxon>Enterobacteriaceae</taxon>
        <taxon>Escherichia</taxon>
    </lineage>
</organism>
<sequence length="384" mass="41575">MIWQEKIDAALDARRVADALRRRYPVAQGAGRWLVADDCQYLNFSSNDYLGLSHHPQIIRAWQQGADQFGVGSGGSGHVSGYSVAHQVLEEELAEWLGYSRALLFISGFAANQAVIAAMMAKEDRIVADRLSHASLLEAASLSPSPLRRFAHNDVTHLARLLASPCPGQQLVVTEGVFSMDGDSAPLEEIQQVTQQHDGWLMVDDAHGTGVIGEQGRGSCWLQKVKPELLVVTFGKGFGVSGAAVLCSNTVADYLLQFARHLIYSTSMPPAQAQALRASLAVIRSDEGDARREKLAALITRFRAGVQDLPFTLAGSCSAIQPLIVGDNSRALQLAEKLRQQGCWVTAIRPPTVPAGTARLRLTLTAAHEMQDIDRLLEVLHGNG</sequence>
<comment type="function">
    <text evidence="1">Catalyzes the decarboxylative condensation of pimeloyl-[acyl-carrier protein] and L-alanine to produce 8-amino-7-oxononanoate (AON), [acyl-carrier protein], and carbon dioxide.</text>
</comment>
<comment type="catalytic activity">
    <reaction evidence="1">
        <text>6-carboxyhexanoyl-[ACP] + L-alanine + H(+) = (8S)-8-amino-7-oxononanoate + holo-[ACP] + CO2</text>
        <dbReference type="Rhea" id="RHEA:42288"/>
        <dbReference type="Rhea" id="RHEA-COMP:9685"/>
        <dbReference type="Rhea" id="RHEA-COMP:9955"/>
        <dbReference type="ChEBI" id="CHEBI:15378"/>
        <dbReference type="ChEBI" id="CHEBI:16526"/>
        <dbReference type="ChEBI" id="CHEBI:57972"/>
        <dbReference type="ChEBI" id="CHEBI:64479"/>
        <dbReference type="ChEBI" id="CHEBI:78846"/>
        <dbReference type="ChEBI" id="CHEBI:149468"/>
        <dbReference type="EC" id="2.3.1.47"/>
    </reaction>
</comment>
<comment type="cofactor">
    <cofactor evidence="1">
        <name>pyridoxal 5'-phosphate</name>
        <dbReference type="ChEBI" id="CHEBI:597326"/>
    </cofactor>
</comment>
<comment type="pathway">
    <text evidence="1">Cofactor biosynthesis; biotin biosynthesis.</text>
</comment>
<comment type="subunit">
    <text evidence="1">Homodimer.</text>
</comment>
<comment type="similarity">
    <text evidence="1">Belongs to the class-II pyridoxal-phosphate-dependent aminotransferase family. BioF subfamily.</text>
</comment>
<accession>Q1REF4</accession>
<proteinExistence type="inferred from homology"/>
<name>BIOF_ECOUT</name>
<gene>
    <name evidence="1" type="primary">bioF</name>
    <name type="ordered locus">UTI89_C0774</name>
</gene>